<evidence type="ECO:0000255" key="1">
    <source>
        <dbReference type="HAMAP-Rule" id="MF_01850"/>
    </source>
</evidence>
<name>TTCA_BURP1</name>
<comment type="function">
    <text evidence="1">Catalyzes the ATP-dependent 2-thiolation of cytidine in position 32 of tRNA, to form 2-thiocytidine (s(2)C32). The sulfur atoms are provided by the cysteine/cysteine desulfurase (IscS) system.</text>
</comment>
<comment type="catalytic activity">
    <reaction evidence="1">
        <text>cytidine(32) in tRNA + S-sulfanyl-L-cysteinyl-[cysteine desulfurase] + AH2 + ATP = 2-thiocytidine(32) in tRNA + L-cysteinyl-[cysteine desulfurase] + A + AMP + diphosphate + H(+)</text>
        <dbReference type="Rhea" id="RHEA:57048"/>
        <dbReference type="Rhea" id="RHEA-COMP:10288"/>
        <dbReference type="Rhea" id="RHEA-COMP:12157"/>
        <dbReference type="Rhea" id="RHEA-COMP:12158"/>
        <dbReference type="Rhea" id="RHEA-COMP:14821"/>
        <dbReference type="ChEBI" id="CHEBI:13193"/>
        <dbReference type="ChEBI" id="CHEBI:15378"/>
        <dbReference type="ChEBI" id="CHEBI:17499"/>
        <dbReference type="ChEBI" id="CHEBI:29950"/>
        <dbReference type="ChEBI" id="CHEBI:30616"/>
        <dbReference type="ChEBI" id="CHEBI:33019"/>
        <dbReference type="ChEBI" id="CHEBI:61963"/>
        <dbReference type="ChEBI" id="CHEBI:82748"/>
        <dbReference type="ChEBI" id="CHEBI:141453"/>
        <dbReference type="ChEBI" id="CHEBI:456215"/>
    </reaction>
    <physiologicalReaction direction="left-to-right" evidence="1">
        <dbReference type="Rhea" id="RHEA:57049"/>
    </physiologicalReaction>
</comment>
<comment type="cofactor">
    <cofactor evidence="1">
        <name>Mg(2+)</name>
        <dbReference type="ChEBI" id="CHEBI:18420"/>
    </cofactor>
</comment>
<comment type="cofactor">
    <cofactor evidence="1">
        <name>[4Fe-4S] cluster</name>
        <dbReference type="ChEBI" id="CHEBI:49883"/>
    </cofactor>
    <text evidence="1">Binds 1 [4Fe-4S] cluster per subunit. The cluster is chelated by three Cys residues, the fourth Fe has a free coordination site that may bind a sulfur atom transferred from the persulfide of IscS.</text>
</comment>
<comment type="pathway">
    <text evidence="1">tRNA modification.</text>
</comment>
<comment type="subunit">
    <text evidence="1">Homodimer.</text>
</comment>
<comment type="subcellular location">
    <subcellularLocation>
        <location evidence="1">Cytoplasm</location>
    </subcellularLocation>
</comment>
<comment type="miscellaneous">
    <text evidence="1">The thiolation reaction likely consists of two steps: a first activation step by ATP to form an adenylated intermediate of the target base of tRNA, and a second nucleophilic substitution step of the sulfur (S) atom supplied by the hydrosulfide attached to the Fe-S cluster.</text>
</comment>
<comment type="similarity">
    <text evidence="1">Belongs to the TtcA family.</text>
</comment>
<sequence length="331" mass="36719">MNAPHTPHLNEAEAAAAVEANAAELGRRALTRREQKEAYENNKLFKRLVRQVGQAIGDYNMIEHGDKVMVCLSGGKDSYALLDILLRLRERAPIDFDIVAVNLDQKQPGFPEHVLPEYLTKIGVPFHIENQDTYSIVKRLVPEGKTTCSLCSRLRRGILYRVAGELGATKIALGHHRDDIVQTLLLNMFYGGKLKGMPPKLQSDDGKNIVIRPLAYAKETDLEKYAELREFPIIPCNLCGSQPNLKRAEMKALIRDWDKRFPGRVDNMFNALANVVPSHLMDARLFPFAGLRATGEADPNGDIAFDEDPCGTDASAPGGAKSVSIVQFDDL</sequence>
<accession>Q3JWX0</accession>
<protein>
    <recommendedName>
        <fullName evidence="1">tRNA-cytidine(32) 2-sulfurtransferase</fullName>
        <ecNumber evidence="1">2.8.1.-</ecNumber>
    </recommendedName>
    <alternativeName>
        <fullName evidence="1">Two-thiocytidine biosynthesis protein A</fullName>
    </alternativeName>
    <alternativeName>
        <fullName evidence="1">tRNA 2-thiocytidine biosynthesis protein TtcA</fullName>
    </alternativeName>
</protein>
<keyword id="KW-0004">4Fe-4S</keyword>
<keyword id="KW-0067">ATP-binding</keyword>
<keyword id="KW-0963">Cytoplasm</keyword>
<keyword id="KW-0408">Iron</keyword>
<keyword id="KW-0411">Iron-sulfur</keyword>
<keyword id="KW-0460">Magnesium</keyword>
<keyword id="KW-0479">Metal-binding</keyword>
<keyword id="KW-0547">Nucleotide-binding</keyword>
<keyword id="KW-0694">RNA-binding</keyword>
<keyword id="KW-0808">Transferase</keyword>
<keyword id="KW-0819">tRNA processing</keyword>
<keyword id="KW-0820">tRNA-binding</keyword>
<proteinExistence type="inferred from homology"/>
<gene>
    <name evidence="1" type="primary">ttcA</name>
    <name type="ordered locus">BURPS1710b_0519</name>
</gene>
<reference key="1">
    <citation type="journal article" date="2010" name="Genome Biol. Evol.">
        <title>Continuing evolution of Burkholderia mallei through genome reduction and large-scale rearrangements.</title>
        <authorList>
            <person name="Losada L."/>
            <person name="Ronning C.M."/>
            <person name="DeShazer D."/>
            <person name="Woods D."/>
            <person name="Fedorova N."/>
            <person name="Kim H.S."/>
            <person name="Shabalina S.A."/>
            <person name="Pearson T.R."/>
            <person name="Brinkac L."/>
            <person name="Tan P."/>
            <person name="Nandi T."/>
            <person name="Crabtree J."/>
            <person name="Badger J."/>
            <person name="Beckstrom-Sternberg S."/>
            <person name="Saqib M."/>
            <person name="Schutzer S.E."/>
            <person name="Keim P."/>
            <person name="Nierman W.C."/>
        </authorList>
    </citation>
    <scope>NUCLEOTIDE SEQUENCE [LARGE SCALE GENOMIC DNA]</scope>
    <source>
        <strain>1710b</strain>
    </source>
</reference>
<organism>
    <name type="scientific">Burkholderia pseudomallei (strain 1710b)</name>
    <dbReference type="NCBI Taxonomy" id="320372"/>
    <lineage>
        <taxon>Bacteria</taxon>
        <taxon>Pseudomonadati</taxon>
        <taxon>Pseudomonadota</taxon>
        <taxon>Betaproteobacteria</taxon>
        <taxon>Burkholderiales</taxon>
        <taxon>Burkholderiaceae</taxon>
        <taxon>Burkholderia</taxon>
        <taxon>pseudomallei group</taxon>
    </lineage>
</organism>
<feature type="chain" id="PRO_0000348693" description="tRNA-cytidine(32) 2-sulfurtransferase">
    <location>
        <begin position="1"/>
        <end position="331"/>
    </location>
</feature>
<feature type="short sequence motif" description="PP-loop motif" evidence="1">
    <location>
        <begin position="73"/>
        <end position="78"/>
    </location>
</feature>
<feature type="binding site" evidence="1">
    <location>
        <position position="148"/>
    </location>
    <ligand>
        <name>[4Fe-4S] cluster</name>
        <dbReference type="ChEBI" id="CHEBI:49883"/>
    </ligand>
</feature>
<feature type="binding site" evidence="1">
    <location>
        <position position="151"/>
    </location>
    <ligand>
        <name>[4Fe-4S] cluster</name>
        <dbReference type="ChEBI" id="CHEBI:49883"/>
    </ligand>
</feature>
<feature type="binding site" evidence="1">
    <location>
        <position position="239"/>
    </location>
    <ligand>
        <name>[4Fe-4S] cluster</name>
        <dbReference type="ChEBI" id="CHEBI:49883"/>
    </ligand>
</feature>
<dbReference type="EC" id="2.8.1.-" evidence="1"/>
<dbReference type="EMBL" id="CP000124">
    <property type="protein sequence ID" value="ABA50365.1"/>
    <property type="molecule type" value="Genomic_DNA"/>
</dbReference>
<dbReference type="RefSeq" id="WP_004189298.1">
    <property type="nucleotide sequence ID" value="NC_007434.1"/>
</dbReference>
<dbReference type="SMR" id="Q3JWX0"/>
<dbReference type="EnsemblBacteria" id="ABA50365">
    <property type="protein sequence ID" value="ABA50365"/>
    <property type="gene ID" value="BURPS1710b_0519"/>
</dbReference>
<dbReference type="GeneID" id="93058831"/>
<dbReference type="KEGG" id="bpm:BURPS1710b_0519"/>
<dbReference type="HOGENOM" id="CLU_026481_0_0_4"/>
<dbReference type="Proteomes" id="UP000002700">
    <property type="component" value="Chromosome I"/>
</dbReference>
<dbReference type="GO" id="GO:0005737">
    <property type="term" value="C:cytoplasm"/>
    <property type="evidence" value="ECO:0007669"/>
    <property type="project" value="UniProtKB-SubCell"/>
</dbReference>
<dbReference type="GO" id="GO:0051539">
    <property type="term" value="F:4 iron, 4 sulfur cluster binding"/>
    <property type="evidence" value="ECO:0007669"/>
    <property type="project" value="UniProtKB-UniRule"/>
</dbReference>
<dbReference type="GO" id="GO:0005524">
    <property type="term" value="F:ATP binding"/>
    <property type="evidence" value="ECO:0007669"/>
    <property type="project" value="UniProtKB-UniRule"/>
</dbReference>
<dbReference type="GO" id="GO:0000287">
    <property type="term" value="F:magnesium ion binding"/>
    <property type="evidence" value="ECO:0007669"/>
    <property type="project" value="UniProtKB-UniRule"/>
</dbReference>
<dbReference type="GO" id="GO:0016783">
    <property type="term" value="F:sulfurtransferase activity"/>
    <property type="evidence" value="ECO:0007669"/>
    <property type="project" value="UniProtKB-UniRule"/>
</dbReference>
<dbReference type="GO" id="GO:0000049">
    <property type="term" value="F:tRNA binding"/>
    <property type="evidence" value="ECO:0007669"/>
    <property type="project" value="UniProtKB-KW"/>
</dbReference>
<dbReference type="GO" id="GO:0034227">
    <property type="term" value="P:tRNA thio-modification"/>
    <property type="evidence" value="ECO:0007669"/>
    <property type="project" value="UniProtKB-UniRule"/>
</dbReference>
<dbReference type="CDD" id="cd24138">
    <property type="entry name" value="TtcA-like"/>
    <property type="match status" value="1"/>
</dbReference>
<dbReference type="Gene3D" id="3.40.50.620">
    <property type="entry name" value="HUPs"/>
    <property type="match status" value="1"/>
</dbReference>
<dbReference type="HAMAP" id="MF_01850">
    <property type="entry name" value="TtcA"/>
    <property type="match status" value="1"/>
</dbReference>
<dbReference type="InterPro" id="IPR014729">
    <property type="entry name" value="Rossmann-like_a/b/a_fold"/>
</dbReference>
<dbReference type="InterPro" id="IPR011063">
    <property type="entry name" value="TilS/TtcA_N"/>
</dbReference>
<dbReference type="InterPro" id="IPR012089">
    <property type="entry name" value="tRNA_Cyd_32_2_STrfase"/>
</dbReference>
<dbReference type="NCBIfam" id="NF007972">
    <property type="entry name" value="PRK10696.1"/>
    <property type="match status" value="1"/>
</dbReference>
<dbReference type="PANTHER" id="PTHR43686:SF1">
    <property type="entry name" value="AMINOTRAN_5 DOMAIN-CONTAINING PROTEIN"/>
    <property type="match status" value="1"/>
</dbReference>
<dbReference type="PANTHER" id="PTHR43686">
    <property type="entry name" value="SULFURTRANSFERASE-RELATED"/>
    <property type="match status" value="1"/>
</dbReference>
<dbReference type="Pfam" id="PF01171">
    <property type="entry name" value="ATP_bind_3"/>
    <property type="match status" value="1"/>
</dbReference>
<dbReference type="SUPFAM" id="SSF52402">
    <property type="entry name" value="Adenine nucleotide alpha hydrolases-like"/>
    <property type="match status" value="1"/>
</dbReference>